<reference key="1">
    <citation type="journal article" date="1992" name="J. Bacteriol.">
        <title>Cloning and sequence analysis of the Chlamydia trachomatis spc ribosomal protein gene cluster.</title>
        <authorList>
            <person name="Kaul R."/>
            <person name="Gray G.J."/>
            <person name="Koehncke N.R."/>
            <person name="Gu L.J."/>
        </authorList>
    </citation>
    <scope>NUCLEOTIDE SEQUENCE [GENOMIC DNA]</scope>
</reference>
<reference key="2">
    <citation type="journal article" date="2008" name="Genome Res.">
        <title>Chlamydia trachomatis: genome sequence analysis of lymphogranuloma venereum isolates.</title>
        <authorList>
            <person name="Thomson N.R."/>
            <person name="Holden M.T.G."/>
            <person name="Carder C."/>
            <person name="Lennard N."/>
            <person name="Lockey S.J."/>
            <person name="Marsh P."/>
            <person name="Skipp P."/>
            <person name="O'Connor C.D."/>
            <person name="Goodhead I."/>
            <person name="Norbertzcak H."/>
            <person name="Harris B."/>
            <person name="Ormond D."/>
            <person name="Rance R."/>
            <person name="Quail M.A."/>
            <person name="Parkhill J."/>
            <person name="Stephens R.S."/>
            <person name="Clarke I.N."/>
        </authorList>
    </citation>
    <scope>NUCLEOTIDE SEQUENCE [LARGE SCALE GENOMIC DNA]</scope>
    <source>
        <strain>ATCC VR-902B / DSM 19102 / 434/Bu</strain>
    </source>
</reference>
<keyword id="KW-0687">Ribonucleoprotein</keyword>
<keyword id="KW-0689">Ribosomal protein</keyword>
<keyword id="KW-0694">RNA-binding</keyword>
<keyword id="KW-0699">rRNA-binding</keyword>
<feature type="chain" id="PRO_1000144241" description="Large ribosomal subunit protein uL14">
    <location>
        <begin position="1"/>
        <end position="122"/>
    </location>
</feature>
<gene>
    <name evidence="1" type="primary">rplN</name>
    <name type="ordered locus">CTL0780</name>
</gene>
<protein>
    <recommendedName>
        <fullName evidence="1">Large ribosomal subunit protein uL14</fullName>
    </recommendedName>
    <alternativeName>
        <fullName evidence="2">50S ribosomal protein L14</fullName>
    </alternativeName>
</protein>
<proteinExistence type="inferred from homology"/>
<accession>B0B892</accession>
<accession>O84524</accession>
<accession>P28533</accession>
<organism>
    <name type="scientific">Chlamydia trachomatis serovar L2 (strain ATCC VR-902B / DSM 19102 / 434/Bu)</name>
    <dbReference type="NCBI Taxonomy" id="471472"/>
    <lineage>
        <taxon>Bacteria</taxon>
        <taxon>Pseudomonadati</taxon>
        <taxon>Chlamydiota</taxon>
        <taxon>Chlamydiia</taxon>
        <taxon>Chlamydiales</taxon>
        <taxon>Chlamydiaceae</taxon>
        <taxon>Chlamydia/Chlamydophila group</taxon>
        <taxon>Chlamydia</taxon>
    </lineage>
</organism>
<dbReference type="EMBL" id="M80325">
    <property type="protein sequence ID" value="AAA23172.1"/>
    <property type="molecule type" value="Genomic_DNA"/>
</dbReference>
<dbReference type="EMBL" id="AM884176">
    <property type="protein sequence ID" value="CAP04218.1"/>
    <property type="molecule type" value="Genomic_DNA"/>
</dbReference>
<dbReference type="PIR" id="D42645">
    <property type="entry name" value="D42645"/>
</dbReference>
<dbReference type="RefSeq" id="WP_009873871.1">
    <property type="nucleotide sequence ID" value="NC_010287.1"/>
</dbReference>
<dbReference type="RefSeq" id="YP_001654851.1">
    <property type="nucleotide sequence ID" value="NC_010287.1"/>
</dbReference>
<dbReference type="SMR" id="B0B892"/>
<dbReference type="KEGG" id="ctb:CTL0780"/>
<dbReference type="PATRIC" id="fig|471472.4.peg.836"/>
<dbReference type="HOGENOM" id="CLU_095071_2_1_0"/>
<dbReference type="Proteomes" id="UP001154402">
    <property type="component" value="Chromosome"/>
</dbReference>
<dbReference type="GO" id="GO:0022625">
    <property type="term" value="C:cytosolic large ribosomal subunit"/>
    <property type="evidence" value="ECO:0007669"/>
    <property type="project" value="TreeGrafter"/>
</dbReference>
<dbReference type="GO" id="GO:0070180">
    <property type="term" value="F:large ribosomal subunit rRNA binding"/>
    <property type="evidence" value="ECO:0007669"/>
    <property type="project" value="TreeGrafter"/>
</dbReference>
<dbReference type="GO" id="GO:0003735">
    <property type="term" value="F:structural constituent of ribosome"/>
    <property type="evidence" value="ECO:0007669"/>
    <property type="project" value="InterPro"/>
</dbReference>
<dbReference type="GO" id="GO:0006412">
    <property type="term" value="P:translation"/>
    <property type="evidence" value="ECO:0007669"/>
    <property type="project" value="UniProtKB-UniRule"/>
</dbReference>
<dbReference type="CDD" id="cd00337">
    <property type="entry name" value="Ribosomal_uL14"/>
    <property type="match status" value="1"/>
</dbReference>
<dbReference type="FunFam" id="2.40.150.20:FF:000001">
    <property type="entry name" value="50S ribosomal protein L14"/>
    <property type="match status" value="1"/>
</dbReference>
<dbReference type="Gene3D" id="2.40.150.20">
    <property type="entry name" value="Ribosomal protein L14"/>
    <property type="match status" value="1"/>
</dbReference>
<dbReference type="HAMAP" id="MF_01367">
    <property type="entry name" value="Ribosomal_uL14"/>
    <property type="match status" value="1"/>
</dbReference>
<dbReference type="InterPro" id="IPR000218">
    <property type="entry name" value="Ribosomal_uL14"/>
</dbReference>
<dbReference type="InterPro" id="IPR005745">
    <property type="entry name" value="Ribosomal_uL14_bac-type"/>
</dbReference>
<dbReference type="InterPro" id="IPR019972">
    <property type="entry name" value="Ribosomal_uL14_CS"/>
</dbReference>
<dbReference type="InterPro" id="IPR036853">
    <property type="entry name" value="Ribosomal_uL14_sf"/>
</dbReference>
<dbReference type="NCBIfam" id="TIGR01067">
    <property type="entry name" value="rplN_bact"/>
    <property type="match status" value="1"/>
</dbReference>
<dbReference type="PANTHER" id="PTHR11761">
    <property type="entry name" value="50S/60S RIBOSOMAL PROTEIN L14/L23"/>
    <property type="match status" value="1"/>
</dbReference>
<dbReference type="PANTHER" id="PTHR11761:SF3">
    <property type="entry name" value="LARGE RIBOSOMAL SUBUNIT PROTEIN UL14M"/>
    <property type="match status" value="1"/>
</dbReference>
<dbReference type="Pfam" id="PF00238">
    <property type="entry name" value="Ribosomal_L14"/>
    <property type="match status" value="1"/>
</dbReference>
<dbReference type="SMART" id="SM01374">
    <property type="entry name" value="Ribosomal_L14"/>
    <property type="match status" value="1"/>
</dbReference>
<dbReference type="SUPFAM" id="SSF50193">
    <property type="entry name" value="Ribosomal protein L14"/>
    <property type="match status" value="1"/>
</dbReference>
<dbReference type="PROSITE" id="PS00049">
    <property type="entry name" value="RIBOSOMAL_L14"/>
    <property type="match status" value="1"/>
</dbReference>
<comment type="function">
    <text evidence="1">Binds to 23S rRNA. Forms part of two intersubunit bridges in the 70S ribosome.</text>
</comment>
<comment type="subunit">
    <text evidence="1">Part of the 50S ribosomal subunit. Forms a cluster with proteins L3 and L19. In the 70S ribosome, L14 and L19 interact and together make contacts with the 16S rRNA in bridges B5 and B8.</text>
</comment>
<comment type="similarity">
    <text evidence="1">Belongs to the universal ribosomal protein uL14 family.</text>
</comment>
<name>RL14_CHLT2</name>
<sequence>MIQQESQLKVADNTGAKKVKCFKVLGGSRRRYATVGDVIVCSVRDIEPDSSVKKGDVVKAVIVRTRNDIHRKDGSTLRFDTNSCVIIDDKGNPKGTRIFGPVAREIRDRGFVKISSLAPEVI</sequence>
<evidence type="ECO:0000255" key="1">
    <source>
        <dbReference type="HAMAP-Rule" id="MF_01367"/>
    </source>
</evidence>
<evidence type="ECO:0000305" key="2"/>